<gene>
    <name type="primary">glcT</name>
    <name type="ordered locus">SAR1369</name>
</gene>
<sequence>MGEYIVTKTLNNNVVVCTNNDQEVILIGKGIGFNKKEGMTLNDQTITIEKIYKLESEQQKAHYKSLVEIADDNVLQVIIDSLNFISNTAMNVDSKQLVVSLTDHIIFAYKRLKQNQVISNPFVMETMQLYSDAYHIAKQVIDQLNAALDVHFPEDEIGFIALHIASNTEDLSMHEMTLINNVIKKGIDIIESDLVTTVDKESLQYQRFIRHVQFLIRRLRRKEYIHAQDDFVSMIKNHYPICYNTAYKILTMIQKQFDVNISESEIIYLTLHIHHFEERINQS</sequence>
<name>GLCT_STAAR</name>
<feature type="chain" id="PRO_0000352610" description="Protein GlcT">
    <location>
        <begin position="1"/>
        <end position="283"/>
    </location>
</feature>
<feature type="domain" description="PRD 1" evidence="1">
    <location>
        <begin position="69"/>
        <end position="173"/>
    </location>
</feature>
<feature type="domain" description="PRD 2" evidence="1">
    <location>
        <begin position="174"/>
        <end position="283"/>
    </location>
</feature>
<protein>
    <recommendedName>
        <fullName>Protein GlcT</fullName>
    </recommendedName>
</protein>
<accession>Q6GH48</accession>
<evidence type="ECO:0000255" key="1">
    <source>
        <dbReference type="PROSITE-ProRule" id="PRU00704"/>
    </source>
</evidence>
<evidence type="ECO:0000305" key="2"/>
<proteinExistence type="inferred from homology"/>
<keyword id="KW-0677">Repeat</keyword>
<organism>
    <name type="scientific">Staphylococcus aureus (strain MRSA252)</name>
    <dbReference type="NCBI Taxonomy" id="282458"/>
    <lineage>
        <taxon>Bacteria</taxon>
        <taxon>Bacillati</taxon>
        <taxon>Bacillota</taxon>
        <taxon>Bacilli</taxon>
        <taxon>Bacillales</taxon>
        <taxon>Staphylococcaceae</taxon>
        <taxon>Staphylococcus</taxon>
    </lineage>
</organism>
<comment type="similarity">
    <text evidence="2">Belongs to the transcriptional antiterminator BglG family. GlcT subfamily.</text>
</comment>
<dbReference type="EMBL" id="BX571856">
    <property type="protein sequence ID" value="CAG40367.1"/>
    <property type="molecule type" value="Genomic_DNA"/>
</dbReference>
<dbReference type="RefSeq" id="WP_000505016.1">
    <property type="nucleotide sequence ID" value="NC_002952.2"/>
</dbReference>
<dbReference type="SMR" id="Q6GH48"/>
<dbReference type="KEGG" id="sar:SAR1369"/>
<dbReference type="HOGENOM" id="CLU_078802_0_0_9"/>
<dbReference type="Proteomes" id="UP000000596">
    <property type="component" value="Chromosome"/>
</dbReference>
<dbReference type="GO" id="GO:0003723">
    <property type="term" value="F:RNA binding"/>
    <property type="evidence" value="ECO:0007669"/>
    <property type="project" value="InterPro"/>
</dbReference>
<dbReference type="GO" id="GO:0045893">
    <property type="term" value="P:positive regulation of DNA-templated transcription"/>
    <property type="evidence" value="ECO:0007669"/>
    <property type="project" value="InterPro"/>
</dbReference>
<dbReference type="Gene3D" id="1.20.58.1950">
    <property type="match status" value="1"/>
</dbReference>
<dbReference type="Gene3D" id="1.20.890.100">
    <property type="match status" value="1"/>
</dbReference>
<dbReference type="Gene3D" id="2.30.24.10">
    <property type="entry name" value="CAT RNA-binding domain"/>
    <property type="match status" value="1"/>
</dbReference>
<dbReference type="Gene3D" id="1.10.1790.10">
    <property type="entry name" value="PRD domain"/>
    <property type="match status" value="1"/>
</dbReference>
<dbReference type="InterPro" id="IPR050661">
    <property type="entry name" value="BglG_antiterminators"/>
</dbReference>
<dbReference type="InterPro" id="IPR004341">
    <property type="entry name" value="CAT_RNA-bd_dom"/>
</dbReference>
<dbReference type="InterPro" id="IPR036650">
    <property type="entry name" value="CAT_RNA-bd_dom_sf"/>
</dbReference>
<dbReference type="InterPro" id="IPR011608">
    <property type="entry name" value="PRD"/>
</dbReference>
<dbReference type="InterPro" id="IPR036634">
    <property type="entry name" value="PRD_sf"/>
</dbReference>
<dbReference type="InterPro" id="IPR001550">
    <property type="entry name" value="Transcrpt_antitermin_CS"/>
</dbReference>
<dbReference type="NCBIfam" id="NF047357">
    <property type="entry name" value="antiterm_GlcT"/>
    <property type="match status" value="1"/>
</dbReference>
<dbReference type="PANTHER" id="PTHR30185">
    <property type="entry name" value="CRYPTIC BETA-GLUCOSIDE BGL OPERON ANTITERMINATOR"/>
    <property type="match status" value="1"/>
</dbReference>
<dbReference type="PANTHER" id="PTHR30185:SF16">
    <property type="entry name" value="PROTEIN GLCT"/>
    <property type="match status" value="1"/>
</dbReference>
<dbReference type="Pfam" id="PF03123">
    <property type="entry name" value="CAT_RBD"/>
    <property type="match status" value="1"/>
</dbReference>
<dbReference type="Pfam" id="PF00874">
    <property type="entry name" value="PRD"/>
    <property type="match status" value="2"/>
</dbReference>
<dbReference type="SMART" id="SM01061">
    <property type="entry name" value="CAT_RBD"/>
    <property type="match status" value="1"/>
</dbReference>
<dbReference type="SUPFAM" id="SSF63520">
    <property type="entry name" value="PTS-regulatory domain, PRD"/>
    <property type="match status" value="2"/>
</dbReference>
<dbReference type="SUPFAM" id="SSF50151">
    <property type="entry name" value="SacY-like RNA-binding domain"/>
    <property type="match status" value="1"/>
</dbReference>
<dbReference type="PROSITE" id="PS00654">
    <property type="entry name" value="PRD_1"/>
    <property type="match status" value="1"/>
</dbReference>
<dbReference type="PROSITE" id="PS51372">
    <property type="entry name" value="PRD_2"/>
    <property type="match status" value="2"/>
</dbReference>
<reference key="1">
    <citation type="journal article" date="2004" name="Proc. Natl. Acad. Sci. U.S.A.">
        <title>Complete genomes of two clinical Staphylococcus aureus strains: evidence for the rapid evolution of virulence and drug resistance.</title>
        <authorList>
            <person name="Holden M.T.G."/>
            <person name="Feil E.J."/>
            <person name="Lindsay J.A."/>
            <person name="Peacock S.J."/>
            <person name="Day N.P.J."/>
            <person name="Enright M.C."/>
            <person name="Foster T.J."/>
            <person name="Moore C.E."/>
            <person name="Hurst L."/>
            <person name="Atkin R."/>
            <person name="Barron A."/>
            <person name="Bason N."/>
            <person name="Bentley S.D."/>
            <person name="Chillingworth C."/>
            <person name="Chillingworth T."/>
            <person name="Churcher C."/>
            <person name="Clark L."/>
            <person name="Corton C."/>
            <person name="Cronin A."/>
            <person name="Doggett J."/>
            <person name="Dowd L."/>
            <person name="Feltwell T."/>
            <person name="Hance Z."/>
            <person name="Harris B."/>
            <person name="Hauser H."/>
            <person name="Holroyd S."/>
            <person name="Jagels K."/>
            <person name="James K.D."/>
            <person name="Lennard N."/>
            <person name="Line A."/>
            <person name="Mayes R."/>
            <person name="Moule S."/>
            <person name="Mungall K."/>
            <person name="Ormond D."/>
            <person name="Quail M.A."/>
            <person name="Rabbinowitsch E."/>
            <person name="Rutherford K.M."/>
            <person name="Sanders M."/>
            <person name="Sharp S."/>
            <person name="Simmonds M."/>
            <person name="Stevens K."/>
            <person name="Whitehead S."/>
            <person name="Barrell B.G."/>
            <person name="Spratt B.G."/>
            <person name="Parkhill J."/>
        </authorList>
    </citation>
    <scope>NUCLEOTIDE SEQUENCE [LARGE SCALE GENOMIC DNA]</scope>
    <source>
        <strain>MRSA252</strain>
    </source>
</reference>